<dbReference type="EMBL" id="AF079428">
    <property type="protein sequence ID" value="AAD32029.1"/>
    <property type="molecule type" value="mRNA"/>
</dbReference>
<dbReference type="EMBL" id="AY359681">
    <property type="protein sequence ID" value="AAR08149.1"/>
    <property type="molecule type" value="Genomic_DNA"/>
</dbReference>
<dbReference type="RefSeq" id="NP_001104918.1">
    <property type="nucleotide sequence ID" value="NM_001111448.1"/>
</dbReference>
<dbReference type="SMR" id="Q67EU8"/>
<dbReference type="FunCoup" id="Q67EU8">
    <property type="interactions" value="1919"/>
</dbReference>
<dbReference type="STRING" id="4577.Q67EU8"/>
<dbReference type="PaxDb" id="4577-GRMZM2G121543_P02"/>
<dbReference type="GeneID" id="541709"/>
<dbReference type="KEGG" id="zma:541709"/>
<dbReference type="MaizeGDB" id="112974"/>
<dbReference type="eggNOG" id="KOG1433">
    <property type="taxonomic scope" value="Eukaryota"/>
</dbReference>
<dbReference type="InParanoid" id="Q67EU8"/>
<dbReference type="OrthoDB" id="10251254at2759"/>
<dbReference type="Proteomes" id="UP000007305">
    <property type="component" value="Unplaced"/>
</dbReference>
<dbReference type="ExpressionAtlas" id="Q67EU8">
    <property type="expression patterns" value="baseline and differential"/>
</dbReference>
<dbReference type="GO" id="GO:0000794">
    <property type="term" value="C:condensed nuclear chromosome"/>
    <property type="evidence" value="ECO:0000318"/>
    <property type="project" value="GO_Central"/>
</dbReference>
<dbReference type="GO" id="GO:0005524">
    <property type="term" value="F:ATP binding"/>
    <property type="evidence" value="ECO:0007669"/>
    <property type="project" value="UniProtKB-KW"/>
</dbReference>
<dbReference type="GO" id="GO:0016887">
    <property type="term" value="F:ATP hydrolysis activity"/>
    <property type="evidence" value="ECO:0007669"/>
    <property type="project" value="InterPro"/>
</dbReference>
<dbReference type="GO" id="GO:0008094">
    <property type="term" value="F:ATP-dependent activity, acting on DNA"/>
    <property type="evidence" value="ECO:0000318"/>
    <property type="project" value="GO_Central"/>
</dbReference>
<dbReference type="GO" id="GO:0140664">
    <property type="term" value="F:ATP-dependent DNA damage sensor activity"/>
    <property type="evidence" value="ECO:0007669"/>
    <property type="project" value="InterPro"/>
</dbReference>
<dbReference type="GO" id="GO:0000150">
    <property type="term" value="F:DNA strand exchange activity"/>
    <property type="evidence" value="ECO:0000318"/>
    <property type="project" value="GO_Central"/>
</dbReference>
<dbReference type="GO" id="GO:0003690">
    <property type="term" value="F:double-stranded DNA binding"/>
    <property type="evidence" value="ECO:0000318"/>
    <property type="project" value="GO_Central"/>
</dbReference>
<dbReference type="GO" id="GO:0003697">
    <property type="term" value="F:single-stranded DNA binding"/>
    <property type="evidence" value="ECO:0000318"/>
    <property type="project" value="GO_Central"/>
</dbReference>
<dbReference type="GO" id="GO:0070192">
    <property type="term" value="P:chromosome organization involved in meiotic cell cycle"/>
    <property type="evidence" value="ECO:0000318"/>
    <property type="project" value="GO_Central"/>
</dbReference>
<dbReference type="GO" id="GO:0000730">
    <property type="term" value="P:DNA recombinase assembly"/>
    <property type="evidence" value="ECO:0000318"/>
    <property type="project" value="GO_Central"/>
</dbReference>
<dbReference type="GO" id="GO:0042148">
    <property type="term" value="P:DNA strand invasion"/>
    <property type="evidence" value="ECO:0000318"/>
    <property type="project" value="GO_Central"/>
</dbReference>
<dbReference type="GO" id="GO:0006312">
    <property type="term" value="P:mitotic recombination"/>
    <property type="evidence" value="ECO:0000318"/>
    <property type="project" value="GO_Central"/>
</dbReference>
<dbReference type="GO" id="GO:1990426">
    <property type="term" value="P:mitotic recombination-dependent replication fork processing"/>
    <property type="evidence" value="ECO:0007669"/>
    <property type="project" value="InterPro"/>
</dbReference>
<dbReference type="GO" id="GO:0007131">
    <property type="term" value="P:reciprocal meiotic recombination"/>
    <property type="evidence" value="ECO:0000318"/>
    <property type="project" value="GO_Central"/>
</dbReference>
<dbReference type="CDD" id="cd19513">
    <property type="entry name" value="Rad51"/>
    <property type="match status" value="1"/>
</dbReference>
<dbReference type="FunFam" id="1.10.150.20:FF:000008">
    <property type="entry name" value="DNA repair protein RAD51 homolog"/>
    <property type="match status" value="1"/>
</dbReference>
<dbReference type="FunFam" id="3.40.50.300:FF:000092">
    <property type="entry name" value="DNA repair protein Rad51 homolog"/>
    <property type="match status" value="1"/>
</dbReference>
<dbReference type="Gene3D" id="1.10.150.20">
    <property type="entry name" value="5' to 3' exonuclease, C-terminal subdomain"/>
    <property type="match status" value="1"/>
</dbReference>
<dbReference type="Gene3D" id="3.40.50.300">
    <property type="entry name" value="P-loop containing nucleotide triphosphate hydrolases"/>
    <property type="match status" value="1"/>
</dbReference>
<dbReference type="InterPro" id="IPR003593">
    <property type="entry name" value="AAA+_ATPase"/>
</dbReference>
<dbReference type="InterPro" id="IPR011941">
    <property type="entry name" value="DNA_recomb/repair_Rad51"/>
</dbReference>
<dbReference type="InterPro" id="IPR013632">
    <property type="entry name" value="DNA_recomb/repair_Rad51_C"/>
</dbReference>
<dbReference type="InterPro" id="IPR016467">
    <property type="entry name" value="DNA_recomb/repair_RecA-like"/>
</dbReference>
<dbReference type="InterPro" id="IPR010995">
    <property type="entry name" value="DNA_repair_Rad51/TF_NusA_a-hlx"/>
</dbReference>
<dbReference type="InterPro" id="IPR027417">
    <property type="entry name" value="P-loop_NTPase"/>
</dbReference>
<dbReference type="InterPro" id="IPR020588">
    <property type="entry name" value="RecA_ATP-bd"/>
</dbReference>
<dbReference type="InterPro" id="IPR020587">
    <property type="entry name" value="RecA_monomer-monomer_interface"/>
</dbReference>
<dbReference type="NCBIfam" id="NF003301">
    <property type="entry name" value="PRK04301.1"/>
    <property type="match status" value="1"/>
</dbReference>
<dbReference type="NCBIfam" id="TIGR02239">
    <property type="entry name" value="recomb_RAD51"/>
    <property type="match status" value="1"/>
</dbReference>
<dbReference type="PANTHER" id="PTHR22942:SF69">
    <property type="entry name" value="DNA REPAIR PROTEIN RAD51 HOMOLOG A"/>
    <property type="match status" value="1"/>
</dbReference>
<dbReference type="PANTHER" id="PTHR22942">
    <property type="entry name" value="RECA/RAD51/RADA DNA STRAND-PAIRING FAMILY MEMBER"/>
    <property type="match status" value="1"/>
</dbReference>
<dbReference type="Pfam" id="PF14520">
    <property type="entry name" value="HHH_5"/>
    <property type="match status" value="1"/>
</dbReference>
<dbReference type="Pfam" id="PF08423">
    <property type="entry name" value="Rad51"/>
    <property type="match status" value="1"/>
</dbReference>
<dbReference type="PIRSF" id="PIRSF005856">
    <property type="entry name" value="Rad51"/>
    <property type="match status" value="1"/>
</dbReference>
<dbReference type="SMART" id="SM00382">
    <property type="entry name" value="AAA"/>
    <property type="match status" value="1"/>
</dbReference>
<dbReference type="SUPFAM" id="SSF52540">
    <property type="entry name" value="P-loop containing nucleoside triphosphate hydrolases"/>
    <property type="match status" value="1"/>
</dbReference>
<dbReference type="SUPFAM" id="SSF47794">
    <property type="entry name" value="Rad51 N-terminal domain-like"/>
    <property type="match status" value="1"/>
</dbReference>
<dbReference type="PROSITE" id="PS50162">
    <property type="entry name" value="RECA_2"/>
    <property type="match status" value="1"/>
</dbReference>
<dbReference type="PROSITE" id="PS50163">
    <property type="entry name" value="RECA_3"/>
    <property type="match status" value="1"/>
</dbReference>
<reference key="1">
    <citation type="journal article" date="1999" name="Plant Cell">
        <title>Three-dimensional microscopy of the Rad51 recombination protein during meiotic prophase.</title>
        <authorList>
            <person name="Franklin A.E."/>
            <person name="McElver J."/>
            <person name="Sunjevaric I."/>
            <person name="Rothstein R."/>
            <person name="Bowen B."/>
            <person name="Cande W.Z."/>
        </authorList>
    </citation>
    <scope>NUCLEOTIDE SEQUENCE [MRNA]</scope>
    <scope>FUNCTION</scope>
    <scope>TISSUE SPECIFICITY</scope>
    <source>
        <strain>cv. A632</strain>
    </source>
</reference>
<reference key="2">
    <citation type="submission" date="2003-08" db="EMBL/GenBank/DDBJ databases">
        <title>Maize RAD51 is required for chromosome segregation but not for chromosome pairing, meiotic recombination or somatic cell viability.</title>
        <authorList>
            <person name="Li J."/>
            <person name="Weber D."/>
            <person name="Meeley R.B."/>
            <person name="Bowen B."/>
            <person name="Schnable P.S."/>
        </authorList>
    </citation>
    <scope>NUCLEOTIDE SEQUENCE [GENOMIC DNA] OF 1-198</scope>
    <source>
        <strain>cv. B73</strain>
    </source>
</reference>
<reference key="3">
    <citation type="journal article" date="2003" name="Plant Cell">
        <title>Altered nuclear distribution of recombination protein RAD51 in maize mutants suggests the involvement of RAD51 in meiotic homology recognition.</title>
        <authorList>
            <person name="Pawlowski W.P."/>
            <person name="Golubovskaya I.N."/>
            <person name="Cande W.Z."/>
        </authorList>
    </citation>
    <scope>FUNCTION</scope>
</reference>
<reference key="4">
    <citation type="journal article" date="2003" name="Chromosoma">
        <title>Improper chromosome synapsis is associated with elongated RAD51 structures in the maize desynaptic2 mutant.</title>
        <authorList>
            <person name="Franklin A.E."/>
            <person name="Golubovskaya I.N."/>
            <person name="Bass H.W."/>
            <person name="Cande W.Z."/>
        </authorList>
    </citation>
    <scope>SUBCELLULAR LOCATION</scope>
</reference>
<proteinExistence type="evidence at transcript level"/>
<accession>Q67EU8</accession>
<accession>Q9XED6</accession>
<organism>
    <name type="scientific">Zea mays</name>
    <name type="common">Maize</name>
    <dbReference type="NCBI Taxonomy" id="4577"/>
    <lineage>
        <taxon>Eukaryota</taxon>
        <taxon>Viridiplantae</taxon>
        <taxon>Streptophyta</taxon>
        <taxon>Embryophyta</taxon>
        <taxon>Tracheophyta</taxon>
        <taxon>Spermatophyta</taxon>
        <taxon>Magnoliopsida</taxon>
        <taxon>Liliopsida</taxon>
        <taxon>Poales</taxon>
        <taxon>Poaceae</taxon>
        <taxon>PACMAD clade</taxon>
        <taxon>Panicoideae</taxon>
        <taxon>Andropogonodae</taxon>
        <taxon>Andropogoneae</taxon>
        <taxon>Tripsacinae</taxon>
        <taxon>Zea</taxon>
    </lineage>
</organism>
<protein>
    <recommendedName>
        <fullName>DNA repair protein RAD51 homolog A</fullName>
    </recommendedName>
    <alternativeName>
        <fullName>Rad51-like protein A</fullName>
        <shortName>RAD51A</shortName>
    </alternativeName>
    <alternativeName>
        <fullName>ZmRAD51a</fullName>
    </alternativeName>
</protein>
<feature type="chain" id="PRO_0000122928" description="DNA repair protein RAD51 homolog A">
    <location>
        <begin position="1"/>
        <end position="340"/>
    </location>
</feature>
<feature type="domain" description="HhH">
    <location>
        <begin position="49"/>
        <end position="78"/>
    </location>
</feature>
<feature type="region of interest" description="Disordered" evidence="3">
    <location>
        <begin position="1"/>
        <end position="21"/>
    </location>
</feature>
<feature type="compositionally biased region" description="Low complexity" evidence="3">
    <location>
        <begin position="1"/>
        <end position="14"/>
    </location>
</feature>
<feature type="binding site" evidence="2">
    <location>
        <begin position="128"/>
        <end position="135"/>
    </location>
    <ligand>
        <name>ATP</name>
        <dbReference type="ChEBI" id="CHEBI:30616"/>
    </ligand>
</feature>
<feature type="sequence conflict" description="In Ref. 2; AAR08149." evidence="7" ref="2">
    <original>P</original>
    <variation>L</variation>
    <location>
        <position position="141"/>
    </location>
</feature>
<comment type="function">
    <text evidence="1 4 6">Binds to single and double-stranded DNA and exhibits DNA-dependent ATPase activity. Unwinds duplex DNA (By similarity). Component of the meiotic recombination pathway. Seems to play a role in mediating chromosome homology search, chromosome pairing and synapsis at early stages and probably chromosome crossing-over at later stages in meiosis. Probably is involved in the repair of meiotic double strand breaks (DBSs) and in homologous recombination.</text>
</comment>
<comment type="subunit">
    <text evidence="1">Self-associates and may interact with XRCC3 homolog.</text>
</comment>
<comment type="subcellular location">
    <subcellularLocation>
        <location evidence="5">Nucleus</location>
    </subcellularLocation>
</comment>
<comment type="tissue specificity">
    <text evidence="4">Highly expressed in mitotic and meiotic tissues, but low levels in differentiated tissues.</text>
</comment>
<comment type="similarity">
    <text evidence="7">Belongs to the RecA family. RAD51 subfamily.</text>
</comment>
<evidence type="ECO:0000250" key="1"/>
<evidence type="ECO:0000255" key="2"/>
<evidence type="ECO:0000256" key="3">
    <source>
        <dbReference type="SAM" id="MobiDB-lite"/>
    </source>
</evidence>
<evidence type="ECO:0000269" key="4">
    <source>
    </source>
</evidence>
<evidence type="ECO:0000269" key="5">
    <source>
    </source>
</evidence>
<evidence type="ECO:0000269" key="6">
    <source>
    </source>
</evidence>
<evidence type="ECO:0000305" key="7"/>
<gene>
    <name type="primary">RAD51A</name>
</gene>
<name>R51A1_MAIZE</name>
<sequence>MSSAAQQQQKAAAAEQEEVEHGPFPIEQLQASGIAALDVKKLKDSGLHTVEAVAYTPRKDLLQIKGISEAKADKIIEAASKIVPLGFTSASQLHAQRLEIIQVTTGSRELDKILEGGIETGSITEIYGEFRSGKTQLCHTPCVTCQLPLDQGGGEGKALYIDAEGTFRPQRLLQIADRFGLNGADVLENVAYARAYNTDHQSRLLLEAASMMIETRFALMVVDSATALYRTDFSGRGELSARQMHMAKFLRSLQKLADEFGVAVVITNQVVAQVDGSAMFAGPQFKPIGGNIMAHASTTRLALRKGRGEERICKVISSPCLAEAEARFQLASEGIADVKD</sequence>
<keyword id="KW-0067">ATP-binding</keyword>
<keyword id="KW-0227">DNA damage</keyword>
<keyword id="KW-0233">DNA recombination</keyword>
<keyword id="KW-0234">DNA repair</keyword>
<keyword id="KW-0238">DNA-binding</keyword>
<keyword id="KW-0547">Nucleotide-binding</keyword>
<keyword id="KW-0539">Nucleus</keyword>
<keyword id="KW-1185">Reference proteome</keyword>